<keyword id="KW-0963">Cytoplasm</keyword>
<keyword id="KW-0460">Magnesium</keyword>
<keyword id="KW-0479">Metal-binding</keyword>
<keyword id="KW-0566">Pantothenate biosynthesis</keyword>
<keyword id="KW-1185">Reference proteome</keyword>
<keyword id="KW-0808">Transferase</keyword>
<proteinExistence type="inferred from homology"/>
<gene>
    <name evidence="1" type="primary">panB</name>
    <name type="ordered locus">Mmc1_0040</name>
</gene>
<feature type="chain" id="PRO_0000297290" description="3-methyl-2-oxobutanoate hydroxymethyltransferase">
    <location>
        <begin position="1"/>
        <end position="268"/>
    </location>
</feature>
<feature type="active site" description="Proton acceptor" evidence="1">
    <location>
        <position position="184"/>
    </location>
</feature>
<feature type="binding site" evidence="1">
    <location>
        <begin position="46"/>
        <end position="47"/>
    </location>
    <ligand>
        <name>3-methyl-2-oxobutanoate</name>
        <dbReference type="ChEBI" id="CHEBI:11851"/>
    </ligand>
</feature>
<feature type="binding site" evidence="1">
    <location>
        <position position="46"/>
    </location>
    <ligand>
        <name>Mg(2+)</name>
        <dbReference type="ChEBI" id="CHEBI:18420"/>
    </ligand>
</feature>
<feature type="binding site" evidence="1">
    <location>
        <position position="85"/>
    </location>
    <ligand>
        <name>3-methyl-2-oxobutanoate</name>
        <dbReference type="ChEBI" id="CHEBI:11851"/>
    </ligand>
</feature>
<feature type="binding site" evidence="1">
    <location>
        <position position="85"/>
    </location>
    <ligand>
        <name>Mg(2+)</name>
        <dbReference type="ChEBI" id="CHEBI:18420"/>
    </ligand>
</feature>
<feature type="binding site" evidence="1">
    <location>
        <position position="115"/>
    </location>
    <ligand>
        <name>3-methyl-2-oxobutanoate</name>
        <dbReference type="ChEBI" id="CHEBI:11851"/>
    </ligand>
</feature>
<feature type="binding site" evidence="1">
    <location>
        <position position="117"/>
    </location>
    <ligand>
        <name>Mg(2+)</name>
        <dbReference type="ChEBI" id="CHEBI:18420"/>
    </ligand>
</feature>
<protein>
    <recommendedName>
        <fullName evidence="1">3-methyl-2-oxobutanoate hydroxymethyltransferase</fullName>
        <ecNumber evidence="1">2.1.2.11</ecNumber>
    </recommendedName>
    <alternativeName>
        <fullName evidence="1">Ketopantoate hydroxymethyltransferase</fullName>
        <shortName evidence="1">KPHMT</shortName>
    </alternativeName>
</protein>
<sequence>MKKRVRVPDLVRMKQQGEPIVALTAYDYTLARLVDAADVDLVLVGDSLGMVVQGHETTLPVTLDEMIYHTRAVARGCQRALVVLDMPFGSTQNGPERTFEQAARAMKESGAAAIKLEGGQAMAATVAYLTERAIPVIGHLGLTPQSVHAFGGFKIQGRDQAAAQRIADDALALQQAGAGAIILEGIPAALAQQVSQSLTIPTIGIGAGVGCDGQVLVIYDMLGLYGDLAPKFVKRYLDGVPVIGGAIGAYVQEVRNRQFPTPDHSFEK</sequence>
<accession>A0L3M6</accession>
<name>PANB_MAGMM</name>
<comment type="function">
    <text evidence="1">Catalyzes the reversible reaction in which hydroxymethyl group from 5,10-methylenetetrahydrofolate is transferred onto alpha-ketoisovalerate to form ketopantoate.</text>
</comment>
<comment type="catalytic activity">
    <reaction evidence="1">
        <text>3-methyl-2-oxobutanoate + (6R)-5,10-methylene-5,6,7,8-tetrahydrofolate + H2O = 2-dehydropantoate + (6S)-5,6,7,8-tetrahydrofolate</text>
        <dbReference type="Rhea" id="RHEA:11824"/>
        <dbReference type="ChEBI" id="CHEBI:11561"/>
        <dbReference type="ChEBI" id="CHEBI:11851"/>
        <dbReference type="ChEBI" id="CHEBI:15377"/>
        <dbReference type="ChEBI" id="CHEBI:15636"/>
        <dbReference type="ChEBI" id="CHEBI:57453"/>
        <dbReference type="EC" id="2.1.2.11"/>
    </reaction>
</comment>
<comment type="cofactor">
    <cofactor evidence="1">
        <name>Mg(2+)</name>
        <dbReference type="ChEBI" id="CHEBI:18420"/>
    </cofactor>
    <text evidence="1">Binds 1 Mg(2+) ion per subunit.</text>
</comment>
<comment type="pathway">
    <text evidence="1">Cofactor biosynthesis; (R)-pantothenate biosynthesis; (R)-pantoate from 3-methyl-2-oxobutanoate: step 1/2.</text>
</comment>
<comment type="subunit">
    <text evidence="1">Homodecamer; pentamer of dimers.</text>
</comment>
<comment type="subcellular location">
    <subcellularLocation>
        <location evidence="1">Cytoplasm</location>
    </subcellularLocation>
</comment>
<comment type="similarity">
    <text evidence="1">Belongs to the PanB family.</text>
</comment>
<dbReference type="EC" id="2.1.2.11" evidence="1"/>
<dbReference type="EMBL" id="CP000471">
    <property type="protein sequence ID" value="ABK42569.1"/>
    <property type="molecule type" value="Genomic_DNA"/>
</dbReference>
<dbReference type="RefSeq" id="WP_011711743.1">
    <property type="nucleotide sequence ID" value="NC_008576.1"/>
</dbReference>
<dbReference type="SMR" id="A0L3M6"/>
<dbReference type="STRING" id="156889.Mmc1_0040"/>
<dbReference type="KEGG" id="mgm:Mmc1_0040"/>
<dbReference type="eggNOG" id="COG0413">
    <property type="taxonomic scope" value="Bacteria"/>
</dbReference>
<dbReference type="HOGENOM" id="CLU_036645_1_0_5"/>
<dbReference type="OrthoDB" id="9781789at2"/>
<dbReference type="UniPathway" id="UPA00028">
    <property type="reaction ID" value="UER00003"/>
</dbReference>
<dbReference type="Proteomes" id="UP000002586">
    <property type="component" value="Chromosome"/>
</dbReference>
<dbReference type="GO" id="GO:0005737">
    <property type="term" value="C:cytoplasm"/>
    <property type="evidence" value="ECO:0007669"/>
    <property type="project" value="UniProtKB-SubCell"/>
</dbReference>
<dbReference type="GO" id="GO:0003864">
    <property type="term" value="F:3-methyl-2-oxobutanoate hydroxymethyltransferase activity"/>
    <property type="evidence" value="ECO:0007669"/>
    <property type="project" value="UniProtKB-UniRule"/>
</dbReference>
<dbReference type="GO" id="GO:0000287">
    <property type="term" value="F:magnesium ion binding"/>
    <property type="evidence" value="ECO:0007669"/>
    <property type="project" value="TreeGrafter"/>
</dbReference>
<dbReference type="GO" id="GO:0015940">
    <property type="term" value="P:pantothenate biosynthetic process"/>
    <property type="evidence" value="ECO:0007669"/>
    <property type="project" value="UniProtKB-UniRule"/>
</dbReference>
<dbReference type="CDD" id="cd06557">
    <property type="entry name" value="KPHMT-like"/>
    <property type="match status" value="1"/>
</dbReference>
<dbReference type="FunFam" id="3.20.20.60:FF:000003">
    <property type="entry name" value="3-methyl-2-oxobutanoate hydroxymethyltransferase"/>
    <property type="match status" value="1"/>
</dbReference>
<dbReference type="Gene3D" id="3.20.20.60">
    <property type="entry name" value="Phosphoenolpyruvate-binding domains"/>
    <property type="match status" value="1"/>
</dbReference>
<dbReference type="HAMAP" id="MF_00156">
    <property type="entry name" value="PanB"/>
    <property type="match status" value="1"/>
</dbReference>
<dbReference type="InterPro" id="IPR003700">
    <property type="entry name" value="Pantoate_hydroxy_MeTrfase"/>
</dbReference>
<dbReference type="InterPro" id="IPR015813">
    <property type="entry name" value="Pyrv/PenolPyrv_kinase-like_dom"/>
</dbReference>
<dbReference type="InterPro" id="IPR040442">
    <property type="entry name" value="Pyrv_kinase-like_dom_sf"/>
</dbReference>
<dbReference type="NCBIfam" id="TIGR00222">
    <property type="entry name" value="panB"/>
    <property type="match status" value="1"/>
</dbReference>
<dbReference type="NCBIfam" id="NF001452">
    <property type="entry name" value="PRK00311.1"/>
    <property type="match status" value="1"/>
</dbReference>
<dbReference type="PANTHER" id="PTHR20881">
    <property type="entry name" value="3-METHYL-2-OXOBUTANOATE HYDROXYMETHYLTRANSFERASE"/>
    <property type="match status" value="1"/>
</dbReference>
<dbReference type="PANTHER" id="PTHR20881:SF0">
    <property type="entry name" value="3-METHYL-2-OXOBUTANOATE HYDROXYMETHYLTRANSFERASE"/>
    <property type="match status" value="1"/>
</dbReference>
<dbReference type="Pfam" id="PF02548">
    <property type="entry name" value="Pantoate_transf"/>
    <property type="match status" value="1"/>
</dbReference>
<dbReference type="PIRSF" id="PIRSF000388">
    <property type="entry name" value="Pantoate_hydroxy_MeTrfase"/>
    <property type="match status" value="1"/>
</dbReference>
<dbReference type="SUPFAM" id="SSF51621">
    <property type="entry name" value="Phosphoenolpyruvate/pyruvate domain"/>
    <property type="match status" value="1"/>
</dbReference>
<evidence type="ECO:0000255" key="1">
    <source>
        <dbReference type="HAMAP-Rule" id="MF_00156"/>
    </source>
</evidence>
<reference key="1">
    <citation type="journal article" date="2009" name="Appl. Environ. Microbiol.">
        <title>Complete genome sequence of the chemolithoautotrophic marine magnetotactic coccus strain MC-1.</title>
        <authorList>
            <person name="Schubbe S."/>
            <person name="Williams T.J."/>
            <person name="Xie G."/>
            <person name="Kiss H.E."/>
            <person name="Brettin T.S."/>
            <person name="Martinez D."/>
            <person name="Ross C.A."/>
            <person name="Schuler D."/>
            <person name="Cox B.L."/>
            <person name="Nealson K.H."/>
            <person name="Bazylinski D.A."/>
        </authorList>
    </citation>
    <scope>NUCLEOTIDE SEQUENCE [LARGE SCALE GENOMIC DNA]</scope>
    <source>
        <strain>ATCC BAA-1437 / JCM 17883 / MC-1</strain>
    </source>
</reference>
<organism>
    <name type="scientific">Magnetococcus marinus (strain ATCC BAA-1437 / JCM 17883 / MC-1)</name>
    <dbReference type="NCBI Taxonomy" id="156889"/>
    <lineage>
        <taxon>Bacteria</taxon>
        <taxon>Pseudomonadati</taxon>
        <taxon>Pseudomonadota</taxon>
        <taxon>Alphaproteobacteria</taxon>
        <taxon>Magnetococcales</taxon>
        <taxon>Magnetococcaceae</taxon>
        <taxon>Magnetococcus</taxon>
    </lineage>
</organism>